<proteinExistence type="inferred from homology"/>
<name>MNTR_LISMF</name>
<feature type="chain" id="PRO_0000201120" description="HTH-type transcriptional regulator MntR">
    <location>
        <begin position="1"/>
        <end position="142"/>
    </location>
</feature>
<feature type="domain" description="HTH dtxR-type" evidence="1">
    <location>
        <begin position="1"/>
        <end position="63"/>
    </location>
</feature>
<feature type="binding site" evidence="1">
    <location>
        <position position="8"/>
    </location>
    <ligand>
        <name>Mn(2+)</name>
        <dbReference type="ChEBI" id="CHEBI:29035"/>
        <label>1</label>
    </ligand>
</feature>
<feature type="binding site" evidence="1">
    <location>
        <position position="11"/>
    </location>
    <ligand>
        <name>Mn(2+)</name>
        <dbReference type="ChEBI" id="CHEBI:29035"/>
        <label>2</label>
    </ligand>
</feature>
<feature type="binding site" evidence="1">
    <location>
        <position position="77"/>
    </location>
    <ligand>
        <name>Mn(2+)</name>
        <dbReference type="ChEBI" id="CHEBI:29035"/>
        <label>2</label>
    </ligand>
</feature>
<feature type="binding site" evidence="1">
    <location>
        <position position="99"/>
    </location>
    <ligand>
        <name>Mn(2+)</name>
        <dbReference type="ChEBI" id="CHEBI:29035"/>
        <label>1</label>
    </ligand>
</feature>
<feature type="binding site" evidence="1">
    <location>
        <position position="99"/>
    </location>
    <ligand>
        <name>Mn(2+)</name>
        <dbReference type="ChEBI" id="CHEBI:29035"/>
        <label>2</label>
    </ligand>
</feature>
<feature type="binding site" evidence="1">
    <location>
        <position position="102"/>
    </location>
    <ligand>
        <name>Mn(2+)</name>
        <dbReference type="ChEBI" id="CHEBI:29035"/>
        <label>1</label>
    </ligand>
</feature>
<feature type="binding site" evidence="1">
    <location>
        <position position="102"/>
    </location>
    <ligand>
        <name>Mn(2+)</name>
        <dbReference type="ChEBI" id="CHEBI:29035"/>
        <label>2</label>
    </ligand>
</feature>
<feature type="binding site" evidence="1">
    <location>
        <position position="103"/>
    </location>
    <ligand>
        <name>Mn(2+)</name>
        <dbReference type="ChEBI" id="CHEBI:29035"/>
        <label>1</label>
    </ligand>
</feature>
<reference key="1">
    <citation type="journal article" date="2004" name="Nucleic Acids Res.">
        <title>Whole genome comparisons of serotype 4b and 1/2a strains of the food-borne pathogen Listeria monocytogenes reveal new insights into the core genome components of this species.</title>
        <authorList>
            <person name="Nelson K.E."/>
            <person name="Fouts D.E."/>
            <person name="Mongodin E.F."/>
            <person name="Ravel J."/>
            <person name="DeBoy R.T."/>
            <person name="Kolonay J.F."/>
            <person name="Rasko D.A."/>
            <person name="Angiuoli S.V."/>
            <person name="Gill S.R."/>
            <person name="Paulsen I.T."/>
            <person name="Peterson J.D."/>
            <person name="White O."/>
            <person name="Nelson W.C."/>
            <person name="Nierman W.C."/>
            <person name="Beanan M.J."/>
            <person name="Brinkac L.M."/>
            <person name="Daugherty S.C."/>
            <person name="Dodson R.J."/>
            <person name="Durkin A.S."/>
            <person name="Madupu R."/>
            <person name="Haft D.H."/>
            <person name="Selengut J."/>
            <person name="Van Aken S.E."/>
            <person name="Khouri H.M."/>
            <person name="Fedorova N."/>
            <person name="Forberger H.A."/>
            <person name="Tran B."/>
            <person name="Kathariou S."/>
            <person name="Wonderling L.D."/>
            <person name="Uhlich G.A."/>
            <person name="Bayles D.O."/>
            <person name="Luchansky J.B."/>
            <person name="Fraser C.M."/>
        </authorList>
    </citation>
    <scope>NUCLEOTIDE SEQUENCE [LARGE SCALE GENOMIC DNA]</scope>
    <source>
        <strain>F2365</strain>
    </source>
</reference>
<organism>
    <name type="scientific">Listeria monocytogenes serotype 4b (strain F2365)</name>
    <dbReference type="NCBI Taxonomy" id="265669"/>
    <lineage>
        <taxon>Bacteria</taxon>
        <taxon>Bacillati</taxon>
        <taxon>Bacillota</taxon>
        <taxon>Bacilli</taxon>
        <taxon>Bacillales</taxon>
        <taxon>Listeriaceae</taxon>
        <taxon>Listeria</taxon>
    </lineage>
</organism>
<sequence length="142" mass="16392">MPTPSMEDYIEKIYSLIETKGYARVSDIADELFVHPSSVTKMVQKLDKDEYLIYEKYRGLILTPKGTQMGKRLLERHALLESFLSIIGVDPSHIYHDVEGIEHHLSWNSIDRIGDVVQFFENHPDALKTLKAMETTKPETKE</sequence>
<dbReference type="EMBL" id="AE017262">
    <property type="protein sequence ID" value="AAT04676.1"/>
    <property type="molecule type" value="Genomic_DNA"/>
</dbReference>
<dbReference type="RefSeq" id="WP_003725831.1">
    <property type="nucleotide sequence ID" value="NC_002973.6"/>
</dbReference>
<dbReference type="SMR" id="Q71YD8"/>
<dbReference type="KEGG" id="lmf:LMOf2365_1907"/>
<dbReference type="HOGENOM" id="CLU_069532_3_0_9"/>
<dbReference type="GO" id="GO:0005737">
    <property type="term" value="C:cytoplasm"/>
    <property type="evidence" value="ECO:0007669"/>
    <property type="project" value="UniProtKB-SubCell"/>
</dbReference>
<dbReference type="GO" id="GO:0003677">
    <property type="term" value="F:DNA binding"/>
    <property type="evidence" value="ECO:0007669"/>
    <property type="project" value="UniProtKB-KW"/>
</dbReference>
<dbReference type="GO" id="GO:0003700">
    <property type="term" value="F:DNA-binding transcription factor activity"/>
    <property type="evidence" value="ECO:0007669"/>
    <property type="project" value="UniProtKB-UniRule"/>
</dbReference>
<dbReference type="GO" id="GO:0030145">
    <property type="term" value="F:manganese ion binding"/>
    <property type="evidence" value="ECO:0007669"/>
    <property type="project" value="UniProtKB-UniRule"/>
</dbReference>
<dbReference type="GO" id="GO:0046983">
    <property type="term" value="F:protein dimerization activity"/>
    <property type="evidence" value="ECO:0007669"/>
    <property type="project" value="InterPro"/>
</dbReference>
<dbReference type="GO" id="GO:0030026">
    <property type="term" value="P:intracellular manganese ion homeostasis"/>
    <property type="evidence" value="ECO:0007669"/>
    <property type="project" value="UniProtKB-UniRule"/>
</dbReference>
<dbReference type="FunFam" id="1.10.10.10:FF:000189">
    <property type="entry name" value="HTH-type transcriptional regulator MntR"/>
    <property type="match status" value="1"/>
</dbReference>
<dbReference type="Gene3D" id="1.10.60.10">
    <property type="entry name" value="Iron dependent repressor, metal binding and dimerisation domain"/>
    <property type="match status" value="1"/>
</dbReference>
<dbReference type="Gene3D" id="1.10.10.10">
    <property type="entry name" value="Winged helix-like DNA-binding domain superfamily/Winged helix DNA-binding domain"/>
    <property type="match status" value="1"/>
</dbReference>
<dbReference type="HAMAP" id="MF_00732">
    <property type="entry name" value="HTH_MntR"/>
    <property type="match status" value="1"/>
</dbReference>
<dbReference type="InterPro" id="IPR050536">
    <property type="entry name" value="DtxR_MntR_Metal-Reg"/>
</dbReference>
<dbReference type="InterPro" id="IPR001367">
    <property type="entry name" value="Fe_dep_repressor"/>
</dbReference>
<dbReference type="InterPro" id="IPR036421">
    <property type="entry name" value="Fe_dep_repressor_sf"/>
</dbReference>
<dbReference type="InterPro" id="IPR022687">
    <property type="entry name" value="HTH_DTXR"/>
</dbReference>
<dbReference type="InterPro" id="IPR022897">
    <property type="entry name" value="HTH_tscrpt_reg_MntR"/>
</dbReference>
<dbReference type="InterPro" id="IPR022689">
    <property type="entry name" value="Iron_dep_repressor"/>
</dbReference>
<dbReference type="InterPro" id="IPR036388">
    <property type="entry name" value="WH-like_DNA-bd_sf"/>
</dbReference>
<dbReference type="InterPro" id="IPR036390">
    <property type="entry name" value="WH_DNA-bd_sf"/>
</dbReference>
<dbReference type="NCBIfam" id="NF003025">
    <property type="entry name" value="PRK03902.1"/>
    <property type="match status" value="1"/>
</dbReference>
<dbReference type="PANTHER" id="PTHR33238">
    <property type="entry name" value="IRON (METAL) DEPENDENT REPRESSOR, DTXR FAMILY"/>
    <property type="match status" value="1"/>
</dbReference>
<dbReference type="PANTHER" id="PTHR33238:SF11">
    <property type="entry name" value="TRANSCRIPTIONAL REGULATOR MNTR"/>
    <property type="match status" value="1"/>
</dbReference>
<dbReference type="Pfam" id="PF02742">
    <property type="entry name" value="Fe_dep_repr_C"/>
    <property type="match status" value="1"/>
</dbReference>
<dbReference type="Pfam" id="PF01325">
    <property type="entry name" value="Fe_dep_repress"/>
    <property type="match status" value="1"/>
</dbReference>
<dbReference type="SMART" id="SM00529">
    <property type="entry name" value="HTH_DTXR"/>
    <property type="match status" value="1"/>
</dbReference>
<dbReference type="SUPFAM" id="SSF47979">
    <property type="entry name" value="Iron-dependent repressor protein, dimerization domain"/>
    <property type="match status" value="1"/>
</dbReference>
<dbReference type="SUPFAM" id="SSF46785">
    <property type="entry name" value="Winged helix' DNA-binding domain"/>
    <property type="match status" value="1"/>
</dbReference>
<dbReference type="PROSITE" id="PS50944">
    <property type="entry name" value="HTH_DTXR"/>
    <property type="match status" value="1"/>
</dbReference>
<protein>
    <recommendedName>
        <fullName evidence="1">HTH-type transcriptional regulator MntR</fullName>
    </recommendedName>
    <alternativeName>
        <fullName evidence="1">Manganese transport regulator</fullName>
    </alternativeName>
</protein>
<accession>Q71YD8</accession>
<evidence type="ECO:0000255" key="1">
    <source>
        <dbReference type="HAMAP-Rule" id="MF_00732"/>
    </source>
</evidence>
<comment type="function">
    <text evidence="1">Central regulator of manganese homeostasis.</text>
</comment>
<comment type="activity regulation">
    <text evidence="1">DNA binding is strongly activated by Mn(2+).</text>
</comment>
<comment type="subunit">
    <text evidence="1">Homodimer.</text>
</comment>
<comment type="subcellular location">
    <subcellularLocation>
        <location evidence="1">Cytoplasm</location>
    </subcellularLocation>
</comment>
<comment type="similarity">
    <text evidence="1">Belongs to the DtxR/MntR family.</text>
</comment>
<gene>
    <name evidence="1" type="primary">mntR</name>
    <name type="ordered locus">LMOf2365_1907</name>
</gene>
<keyword id="KW-0010">Activator</keyword>
<keyword id="KW-0963">Cytoplasm</keyword>
<keyword id="KW-0238">DNA-binding</keyword>
<keyword id="KW-0464">Manganese</keyword>
<keyword id="KW-0479">Metal-binding</keyword>
<keyword id="KW-0678">Repressor</keyword>
<keyword id="KW-0804">Transcription</keyword>
<keyword id="KW-0805">Transcription regulation</keyword>